<reference key="1">
    <citation type="journal article" date="1998" name="Biochim. Biophys. Acta">
        <title>Isolation and expression of a human SRY-related cDNA hSOX20.</title>
        <authorList>
            <person name="Hiraoka Y."/>
            <person name="Ogawa M."/>
            <person name="Sakai Y."/>
            <person name="Taniguchi K."/>
            <person name="Fujii T."/>
            <person name="Umezawa A."/>
            <person name="Hata J."/>
            <person name="Aiso S."/>
        </authorList>
    </citation>
    <scope>NUCLEOTIDE SEQUENCE [MRNA] (ISOFORM 1)</scope>
</reference>
<reference key="2">
    <citation type="journal article" date="2004" name="Nat. Genet.">
        <title>Complete sequencing and characterization of 21,243 full-length human cDNAs.</title>
        <authorList>
            <person name="Ota T."/>
            <person name="Suzuki Y."/>
            <person name="Nishikawa T."/>
            <person name="Otsuki T."/>
            <person name="Sugiyama T."/>
            <person name="Irie R."/>
            <person name="Wakamatsu A."/>
            <person name="Hayashi K."/>
            <person name="Sato H."/>
            <person name="Nagai K."/>
            <person name="Kimura K."/>
            <person name="Makita H."/>
            <person name="Sekine M."/>
            <person name="Obayashi M."/>
            <person name="Nishi T."/>
            <person name="Shibahara T."/>
            <person name="Tanaka T."/>
            <person name="Ishii S."/>
            <person name="Yamamoto J."/>
            <person name="Saito K."/>
            <person name="Kawai Y."/>
            <person name="Isono Y."/>
            <person name="Nakamura Y."/>
            <person name="Nagahari K."/>
            <person name="Murakami K."/>
            <person name="Yasuda T."/>
            <person name="Iwayanagi T."/>
            <person name="Wagatsuma M."/>
            <person name="Shiratori A."/>
            <person name="Sudo H."/>
            <person name="Hosoiri T."/>
            <person name="Kaku Y."/>
            <person name="Kodaira H."/>
            <person name="Kondo H."/>
            <person name="Sugawara M."/>
            <person name="Takahashi M."/>
            <person name="Kanda K."/>
            <person name="Yokoi T."/>
            <person name="Furuya T."/>
            <person name="Kikkawa E."/>
            <person name="Omura Y."/>
            <person name="Abe K."/>
            <person name="Kamihara K."/>
            <person name="Katsuta N."/>
            <person name="Sato K."/>
            <person name="Tanikawa M."/>
            <person name="Yamazaki M."/>
            <person name="Ninomiya K."/>
            <person name="Ishibashi T."/>
            <person name="Yamashita H."/>
            <person name="Murakawa K."/>
            <person name="Fujimori K."/>
            <person name="Tanai H."/>
            <person name="Kimata M."/>
            <person name="Watanabe M."/>
            <person name="Hiraoka S."/>
            <person name="Chiba Y."/>
            <person name="Ishida S."/>
            <person name="Ono Y."/>
            <person name="Takiguchi S."/>
            <person name="Watanabe S."/>
            <person name="Yosida M."/>
            <person name="Hotuta T."/>
            <person name="Kusano J."/>
            <person name="Kanehori K."/>
            <person name="Takahashi-Fujii A."/>
            <person name="Hara H."/>
            <person name="Tanase T.-O."/>
            <person name="Nomura Y."/>
            <person name="Togiya S."/>
            <person name="Komai F."/>
            <person name="Hara R."/>
            <person name="Takeuchi K."/>
            <person name="Arita M."/>
            <person name="Imose N."/>
            <person name="Musashino K."/>
            <person name="Yuuki H."/>
            <person name="Oshima A."/>
            <person name="Sasaki N."/>
            <person name="Aotsuka S."/>
            <person name="Yoshikawa Y."/>
            <person name="Matsunawa H."/>
            <person name="Ichihara T."/>
            <person name="Shiohata N."/>
            <person name="Sano S."/>
            <person name="Moriya S."/>
            <person name="Momiyama H."/>
            <person name="Satoh N."/>
            <person name="Takami S."/>
            <person name="Terashima Y."/>
            <person name="Suzuki O."/>
            <person name="Nakagawa S."/>
            <person name="Senoh A."/>
            <person name="Mizoguchi H."/>
            <person name="Goto Y."/>
            <person name="Shimizu F."/>
            <person name="Wakebe H."/>
            <person name="Hishigaki H."/>
            <person name="Watanabe T."/>
            <person name="Sugiyama A."/>
            <person name="Takemoto M."/>
            <person name="Kawakami B."/>
            <person name="Yamazaki M."/>
            <person name="Watanabe K."/>
            <person name="Kumagai A."/>
            <person name="Itakura S."/>
            <person name="Fukuzumi Y."/>
            <person name="Fujimori Y."/>
            <person name="Komiyama M."/>
            <person name="Tashiro H."/>
            <person name="Tanigami A."/>
            <person name="Fujiwara T."/>
            <person name="Ono T."/>
            <person name="Yamada K."/>
            <person name="Fujii Y."/>
            <person name="Ozaki K."/>
            <person name="Hirao M."/>
            <person name="Ohmori Y."/>
            <person name="Kawabata A."/>
            <person name="Hikiji T."/>
            <person name="Kobatake N."/>
            <person name="Inagaki H."/>
            <person name="Ikema Y."/>
            <person name="Okamoto S."/>
            <person name="Okitani R."/>
            <person name="Kawakami T."/>
            <person name="Noguchi S."/>
            <person name="Itoh T."/>
            <person name="Shigeta K."/>
            <person name="Senba T."/>
            <person name="Matsumura K."/>
            <person name="Nakajima Y."/>
            <person name="Mizuno T."/>
            <person name="Morinaga M."/>
            <person name="Sasaki M."/>
            <person name="Togashi T."/>
            <person name="Oyama M."/>
            <person name="Hata H."/>
            <person name="Watanabe M."/>
            <person name="Komatsu T."/>
            <person name="Mizushima-Sugano J."/>
            <person name="Satoh T."/>
            <person name="Shirai Y."/>
            <person name="Takahashi Y."/>
            <person name="Nakagawa K."/>
            <person name="Okumura K."/>
            <person name="Nagase T."/>
            <person name="Nomura N."/>
            <person name="Kikuchi H."/>
            <person name="Masuho Y."/>
            <person name="Yamashita R."/>
            <person name="Nakai K."/>
            <person name="Yada T."/>
            <person name="Nakamura Y."/>
            <person name="Ohara O."/>
            <person name="Isogai T."/>
            <person name="Sugano S."/>
        </authorList>
    </citation>
    <scope>NUCLEOTIDE SEQUENCE [LARGE SCALE MRNA] (ISOFORM 2)</scope>
    <source>
        <tissue>Esophagus</tissue>
    </source>
</reference>
<reference key="3">
    <citation type="journal article" date="2006" name="Nature">
        <title>DNA sequence of human chromosome 17 and analysis of rearrangement in the human lineage.</title>
        <authorList>
            <person name="Zody M.C."/>
            <person name="Garber M."/>
            <person name="Adams D.J."/>
            <person name="Sharpe T."/>
            <person name="Harrow J."/>
            <person name="Lupski J.R."/>
            <person name="Nicholson C."/>
            <person name="Searle S.M."/>
            <person name="Wilming L."/>
            <person name="Young S.K."/>
            <person name="Abouelleil A."/>
            <person name="Allen N.R."/>
            <person name="Bi W."/>
            <person name="Bloom T."/>
            <person name="Borowsky M.L."/>
            <person name="Bugalter B.E."/>
            <person name="Butler J."/>
            <person name="Chang J.L."/>
            <person name="Chen C.-K."/>
            <person name="Cook A."/>
            <person name="Corum B."/>
            <person name="Cuomo C.A."/>
            <person name="de Jong P.J."/>
            <person name="DeCaprio D."/>
            <person name="Dewar K."/>
            <person name="FitzGerald M."/>
            <person name="Gilbert J."/>
            <person name="Gibson R."/>
            <person name="Gnerre S."/>
            <person name="Goldstein S."/>
            <person name="Grafham D.V."/>
            <person name="Grocock R."/>
            <person name="Hafez N."/>
            <person name="Hagopian D.S."/>
            <person name="Hart E."/>
            <person name="Norman C.H."/>
            <person name="Humphray S."/>
            <person name="Jaffe D.B."/>
            <person name="Jones M."/>
            <person name="Kamal M."/>
            <person name="Khodiyar V.K."/>
            <person name="LaButti K."/>
            <person name="Laird G."/>
            <person name="Lehoczky J."/>
            <person name="Liu X."/>
            <person name="Lokyitsang T."/>
            <person name="Loveland J."/>
            <person name="Lui A."/>
            <person name="Macdonald P."/>
            <person name="Major J.E."/>
            <person name="Matthews L."/>
            <person name="Mauceli E."/>
            <person name="McCarroll S.A."/>
            <person name="Mihalev A.H."/>
            <person name="Mudge J."/>
            <person name="Nguyen C."/>
            <person name="Nicol R."/>
            <person name="O'Leary S.B."/>
            <person name="Osoegawa K."/>
            <person name="Schwartz D.C."/>
            <person name="Shaw-Smith C."/>
            <person name="Stankiewicz P."/>
            <person name="Steward C."/>
            <person name="Swarbreck D."/>
            <person name="Venkataraman V."/>
            <person name="Whittaker C.A."/>
            <person name="Yang X."/>
            <person name="Zimmer A.R."/>
            <person name="Bradley A."/>
            <person name="Hubbard T."/>
            <person name="Birren B.W."/>
            <person name="Rogers J."/>
            <person name="Lander E.S."/>
            <person name="Nusbaum C."/>
        </authorList>
    </citation>
    <scope>NUCLEOTIDE SEQUENCE [LARGE SCALE GENOMIC DNA]</scope>
</reference>
<reference key="4">
    <citation type="submission" date="2005-09" db="EMBL/GenBank/DDBJ databases">
        <authorList>
            <person name="Mural R.J."/>
            <person name="Istrail S."/>
            <person name="Sutton G.G."/>
            <person name="Florea L."/>
            <person name="Halpern A.L."/>
            <person name="Mobarry C.M."/>
            <person name="Lippert R."/>
            <person name="Walenz B."/>
            <person name="Shatkay H."/>
            <person name="Dew I."/>
            <person name="Miller J.R."/>
            <person name="Flanigan M.J."/>
            <person name="Edwards N.J."/>
            <person name="Bolanos R."/>
            <person name="Fasulo D."/>
            <person name="Halldorsson B.V."/>
            <person name="Hannenhalli S."/>
            <person name="Turner R."/>
            <person name="Yooseph S."/>
            <person name="Lu F."/>
            <person name="Nusskern D.R."/>
            <person name="Shue B.C."/>
            <person name="Zheng X.H."/>
            <person name="Zhong F."/>
            <person name="Delcher A.L."/>
            <person name="Huson D.H."/>
            <person name="Kravitz S.A."/>
            <person name="Mouchard L."/>
            <person name="Reinert K."/>
            <person name="Remington K.A."/>
            <person name="Clark A.G."/>
            <person name="Waterman M.S."/>
            <person name="Eichler E.E."/>
            <person name="Adams M.D."/>
            <person name="Hunkapiller M.W."/>
            <person name="Myers E.W."/>
            <person name="Venter J.C."/>
        </authorList>
    </citation>
    <scope>NUCLEOTIDE SEQUENCE [LARGE SCALE GENOMIC DNA]</scope>
</reference>
<reference key="5">
    <citation type="journal article" date="2004" name="Genome Res.">
        <title>The status, quality, and expansion of the NIH full-length cDNA project: the Mammalian Gene Collection (MGC).</title>
        <authorList>
            <consortium name="The MGC Project Team"/>
        </authorList>
    </citation>
    <scope>NUCLEOTIDE SEQUENCE [LARGE SCALE MRNA] (ISOFORM 1)</scope>
    <source>
        <tissue>Placenta</tissue>
    </source>
</reference>
<reference key="6">
    <citation type="journal article" date="1996" name="Cytogenet. Cell Genet.">
        <title>SOX20, a new member of the SOX gene family, is located on chromosome 17p13.</title>
        <authorList>
            <person name="Meyer J."/>
            <person name="Wirth J."/>
            <person name="Held M."/>
            <person name="Schempp W."/>
            <person name="Scherer G."/>
        </authorList>
    </citation>
    <scope>NUCLEOTIDE SEQUENCE OF 1-178</scope>
    <scope>TISSUE SPECIFICITY</scope>
    <source>
        <tissue>Fetal brain</tissue>
    </source>
</reference>
<reference key="7">
    <citation type="journal article" date="1993" name="Nucleic Acids Res.">
        <title>Partial cloning of SOX-11 and SOX-12, two new human SOX genes.</title>
        <authorList>
            <person name="Goze C."/>
            <person name="Poulat F."/>
            <person name="Berta P."/>
        </authorList>
    </citation>
    <scope>NUCLEOTIDE SEQUENCE [GENOMIC DNA] OF 57-115</scope>
</reference>
<reference key="8">
    <citation type="journal article" date="1998" name="Mamm. Genome">
        <title>cDNA characterization and high resolution mapping of the human SOX20 gene.</title>
        <authorList>
            <person name="Vujic M."/>
            <person name="Rajic T."/>
            <person name="Goodfellow P.N."/>
            <person name="Stevanovic M."/>
        </authorList>
    </citation>
    <scope>NUCLEOTIDE SEQUENCE [MRNA] OF 92-233 (ISOFORM 1)</scope>
    <scope>TISSUE SPECIFICITY</scope>
    <source>
        <tissue>Brain</tissue>
    </source>
</reference>
<reference key="9">
    <citation type="submission" date="1999-03" db="EMBL/GenBank/DDBJ databases">
        <title>Human SL15 gene, 3'UTR and SOX 20 gene, partial cds.</title>
        <authorList>
            <person name="Miyashita A."/>
            <person name="Shimizu N."/>
            <person name="Odani S."/>
            <person name="Nakajima T."/>
            <person name="Kuwano R."/>
        </authorList>
    </citation>
    <scope>NUCLEOTIDE SEQUENCE [GENOMIC DNA] OF 179-233</scope>
</reference>
<reference key="10">
    <citation type="journal article" date="2011" name="Sci. Signal.">
        <title>System-wide temporal characterization of the proteome and phosphoproteome of human embryonic stem cell differentiation.</title>
        <authorList>
            <person name="Rigbolt K.T."/>
            <person name="Prokhorova T.A."/>
            <person name="Akimov V."/>
            <person name="Henningsen J."/>
            <person name="Johansen P.T."/>
            <person name="Kratchmarova I."/>
            <person name="Kassem M."/>
            <person name="Mann M."/>
            <person name="Olsen J.V."/>
            <person name="Blagoev B."/>
        </authorList>
    </citation>
    <scope>PHOSPHORYLATION [LARGE SCALE ANALYSIS] AT SER-37</scope>
    <scope>IDENTIFICATION BY MASS SPECTROMETRY [LARGE SCALE ANALYSIS]</scope>
</reference>
<dbReference type="EMBL" id="AB006867">
    <property type="protein sequence ID" value="BAA25663.1"/>
    <property type="molecule type" value="mRNA"/>
</dbReference>
<dbReference type="EMBL" id="AK301687">
    <property type="protein sequence ID" value="BAG63159.1"/>
    <property type="molecule type" value="mRNA"/>
</dbReference>
<dbReference type="EMBL" id="AC016876">
    <property type="status" value="NOT_ANNOTATED_CDS"/>
    <property type="molecule type" value="Genomic_DNA"/>
</dbReference>
<dbReference type="EMBL" id="CH471108">
    <property type="protein sequence ID" value="EAW90156.1"/>
    <property type="molecule type" value="Genomic_DNA"/>
</dbReference>
<dbReference type="EMBL" id="CH471108">
    <property type="protein sequence ID" value="EAW90157.1"/>
    <property type="molecule type" value="Genomic_DNA"/>
</dbReference>
<dbReference type="EMBL" id="BC000985">
    <property type="protein sequence ID" value="AAH00985.1"/>
    <property type="molecule type" value="mRNA"/>
</dbReference>
<dbReference type="EMBL" id="BC072003">
    <property type="protein sequence ID" value="AAH72003.1"/>
    <property type="molecule type" value="mRNA"/>
</dbReference>
<dbReference type="EMBL" id="X73039">
    <property type="protein sequence ID" value="CAA51520.1"/>
    <property type="molecule type" value="Genomic_DNA"/>
</dbReference>
<dbReference type="EMBL" id="AJ006222">
    <property type="protein sequence ID" value="CAA06920.1"/>
    <property type="molecule type" value="mRNA"/>
</dbReference>
<dbReference type="EMBL" id="AB025355">
    <property type="protein sequence ID" value="BAA78784.1"/>
    <property type="molecule type" value="Genomic_DNA"/>
</dbReference>
<dbReference type="CCDS" id="CCDS32549.1">
    <molecule id="O60248-1"/>
</dbReference>
<dbReference type="PIR" id="S34119">
    <property type="entry name" value="S34119"/>
</dbReference>
<dbReference type="RefSeq" id="NP_008873.1">
    <molecule id="O60248-1"/>
    <property type="nucleotide sequence ID" value="NM_006942.2"/>
</dbReference>
<dbReference type="SMR" id="O60248"/>
<dbReference type="BioGRID" id="112548">
    <property type="interactions" value="137"/>
</dbReference>
<dbReference type="FunCoup" id="O60248">
    <property type="interactions" value="241"/>
</dbReference>
<dbReference type="IntAct" id="O60248">
    <property type="interactions" value="129"/>
</dbReference>
<dbReference type="MINT" id="O60248"/>
<dbReference type="STRING" id="9606.ENSP00000355354"/>
<dbReference type="GlyGen" id="O60248">
    <property type="glycosylation" value="1 site, 1 O-linked glycan (1 site)"/>
</dbReference>
<dbReference type="iPTMnet" id="O60248"/>
<dbReference type="PhosphoSitePlus" id="O60248"/>
<dbReference type="BioMuta" id="SOX15"/>
<dbReference type="MassIVE" id="O60248"/>
<dbReference type="PaxDb" id="9606-ENSP00000355354"/>
<dbReference type="PeptideAtlas" id="O60248"/>
<dbReference type="ProteomicsDB" id="49282">
    <molecule id="O60248-1"/>
</dbReference>
<dbReference type="ProteomicsDB" id="5383"/>
<dbReference type="Antibodypedia" id="12118">
    <property type="antibodies" value="196 antibodies from 32 providers"/>
</dbReference>
<dbReference type="DNASU" id="6665"/>
<dbReference type="Ensembl" id="ENST00000250055.3">
    <molecule id="O60248-1"/>
    <property type="protein sequence ID" value="ENSP00000355354.2"/>
    <property type="gene ID" value="ENSG00000129194.8"/>
</dbReference>
<dbReference type="Ensembl" id="ENST00000538513.6">
    <molecule id="O60248-1"/>
    <property type="protein sequence ID" value="ENSP00000439311.2"/>
    <property type="gene ID" value="ENSG00000129194.8"/>
</dbReference>
<dbReference type="Ensembl" id="ENST00000570788.1">
    <molecule id="O60248-2"/>
    <property type="protein sequence ID" value="ENSP00000458286.1"/>
    <property type="gene ID" value="ENSG00000129194.8"/>
</dbReference>
<dbReference type="GeneID" id="6665"/>
<dbReference type="KEGG" id="hsa:6665"/>
<dbReference type="MANE-Select" id="ENST00000250055.3">
    <property type="protein sequence ID" value="ENSP00000355354.2"/>
    <property type="RefSeq nucleotide sequence ID" value="NM_006942.2"/>
    <property type="RefSeq protein sequence ID" value="NP_008873.1"/>
</dbReference>
<dbReference type="UCSC" id="uc002ghy.2">
    <molecule id="O60248-1"/>
    <property type="organism name" value="human"/>
</dbReference>
<dbReference type="AGR" id="HGNC:11196"/>
<dbReference type="CTD" id="6665"/>
<dbReference type="DisGeNET" id="6665"/>
<dbReference type="GeneCards" id="SOX15"/>
<dbReference type="HGNC" id="HGNC:11196">
    <property type="gene designation" value="SOX15"/>
</dbReference>
<dbReference type="HPA" id="ENSG00000129194">
    <property type="expression patterns" value="Tissue enhanced (esophagus, skin)"/>
</dbReference>
<dbReference type="MIM" id="601297">
    <property type="type" value="gene"/>
</dbReference>
<dbReference type="neXtProt" id="NX_O60248"/>
<dbReference type="OpenTargets" id="ENSG00000129194"/>
<dbReference type="PharmGKB" id="PA36033"/>
<dbReference type="VEuPathDB" id="HostDB:ENSG00000129194"/>
<dbReference type="eggNOG" id="KOG0527">
    <property type="taxonomic scope" value="Eukaryota"/>
</dbReference>
<dbReference type="GeneTree" id="ENSGT00940000162099"/>
<dbReference type="HOGENOM" id="CLU_106341_0_0_1"/>
<dbReference type="InParanoid" id="O60248"/>
<dbReference type="OMA" id="HCKPEAP"/>
<dbReference type="OrthoDB" id="6247875at2759"/>
<dbReference type="PAN-GO" id="O60248">
    <property type="GO annotations" value="6 GO annotations based on evolutionary models"/>
</dbReference>
<dbReference type="PhylomeDB" id="O60248"/>
<dbReference type="TreeFam" id="TF351735"/>
<dbReference type="PathwayCommons" id="O60248"/>
<dbReference type="SignaLink" id="O60248"/>
<dbReference type="BioGRID-ORCS" id="6665">
    <property type="hits" value="40 hits in 1168 CRISPR screens"/>
</dbReference>
<dbReference type="ChiTaRS" id="SOX15">
    <property type="organism name" value="human"/>
</dbReference>
<dbReference type="GeneWiki" id="SOX15"/>
<dbReference type="GenomeRNAi" id="6665"/>
<dbReference type="Pharos" id="O60248">
    <property type="development level" value="Tbio"/>
</dbReference>
<dbReference type="PRO" id="PR:O60248"/>
<dbReference type="Proteomes" id="UP000005640">
    <property type="component" value="Chromosome 17"/>
</dbReference>
<dbReference type="RNAct" id="O60248">
    <property type="molecule type" value="protein"/>
</dbReference>
<dbReference type="Bgee" id="ENSG00000129194">
    <property type="expression patterns" value="Expressed in lower esophagus mucosa and 156 other cell types or tissues"/>
</dbReference>
<dbReference type="GO" id="GO:0000785">
    <property type="term" value="C:chromatin"/>
    <property type="evidence" value="ECO:0000247"/>
    <property type="project" value="NTNU_SB"/>
</dbReference>
<dbReference type="GO" id="GO:0005737">
    <property type="term" value="C:cytoplasm"/>
    <property type="evidence" value="ECO:0007669"/>
    <property type="project" value="Ensembl"/>
</dbReference>
<dbReference type="GO" id="GO:0005634">
    <property type="term" value="C:nucleus"/>
    <property type="evidence" value="ECO:0000318"/>
    <property type="project" value="GO_Central"/>
</dbReference>
<dbReference type="GO" id="GO:0005667">
    <property type="term" value="C:transcription regulator complex"/>
    <property type="evidence" value="ECO:0007669"/>
    <property type="project" value="Ensembl"/>
</dbReference>
<dbReference type="GO" id="GO:0003682">
    <property type="term" value="F:chromatin binding"/>
    <property type="evidence" value="ECO:0007669"/>
    <property type="project" value="Ensembl"/>
</dbReference>
<dbReference type="GO" id="GO:0003677">
    <property type="term" value="F:DNA binding"/>
    <property type="evidence" value="ECO:0000303"/>
    <property type="project" value="UniProtKB"/>
</dbReference>
<dbReference type="GO" id="GO:0001228">
    <property type="term" value="F:DNA-binding transcription activator activity, RNA polymerase II-specific"/>
    <property type="evidence" value="ECO:0000318"/>
    <property type="project" value="GO_Central"/>
</dbReference>
<dbReference type="GO" id="GO:0003700">
    <property type="term" value="F:DNA-binding transcription factor activity"/>
    <property type="evidence" value="ECO:0000303"/>
    <property type="project" value="UniProtKB"/>
</dbReference>
<dbReference type="GO" id="GO:0000981">
    <property type="term" value="F:DNA-binding transcription factor activity, RNA polymerase II-specific"/>
    <property type="evidence" value="ECO:0000247"/>
    <property type="project" value="NTNU_SB"/>
</dbReference>
<dbReference type="GO" id="GO:0000978">
    <property type="term" value="F:RNA polymerase II cis-regulatory region sequence-specific DNA binding"/>
    <property type="evidence" value="ECO:0000318"/>
    <property type="project" value="GO_Central"/>
</dbReference>
<dbReference type="GO" id="GO:0007420">
    <property type="term" value="P:brain development"/>
    <property type="evidence" value="ECO:0000318"/>
    <property type="project" value="GO_Central"/>
</dbReference>
<dbReference type="GO" id="GO:0030154">
    <property type="term" value="P:cell differentiation"/>
    <property type="evidence" value="ECO:0000250"/>
    <property type="project" value="BHF-UCL"/>
</dbReference>
<dbReference type="GO" id="GO:0006325">
    <property type="term" value="P:chromatin organization"/>
    <property type="evidence" value="ECO:0000303"/>
    <property type="project" value="UniProtKB"/>
</dbReference>
<dbReference type="GO" id="GO:0008584">
    <property type="term" value="P:male gonad development"/>
    <property type="evidence" value="ECO:0000304"/>
    <property type="project" value="ProtInc"/>
</dbReference>
<dbReference type="GO" id="GO:0048627">
    <property type="term" value="P:myoblast development"/>
    <property type="evidence" value="ECO:0000250"/>
    <property type="project" value="BHF-UCL"/>
</dbReference>
<dbReference type="GO" id="GO:0045843">
    <property type="term" value="P:negative regulation of striated muscle tissue development"/>
    <property type="evidence" value="ECO:0000250"/>
    <property type="project" value="BHF-UCL"/>
</dbReference>
<dbReference type="GO" id="GO:0000122">
    <property type="term" value="P:negative regulation of transcription by RNA polymerase II"/>
    <property type="evidence" value="ECO:0000250"/>
    <property type="project" value="BHF-UCL"/>
</dbReference>
<dbReference type="GO" id="GO:0030182">
    <property type="term" value="P:neuron differentiation"/>
    <property type="evidence" value="ECO:0000318"/>
    <property type="project" value="GO_Central"/>
</dbReference>
<dbReference type="GO" id="GO:0070318">
    <property type="term" value="P:positive regulation of G0 to G1 transition"/>
    <property type="evidence" value="ECO:0000250"/>
    <property type="project" value="BHF-UCL"/>
</dbReference>
<dbReference type="GO" id="GO:2000288">
    <property type="term" value="P:positive regulation of myoblast proliferation"/>
    <property type="evidence" value="ECO:0000250"/>
    <property type="project" value="BHF-UCL"/>
</dbReference>
<dbReference type="GO" id="GO:0014718">
    <property type="term" value="P:positive regulation of satellite cell activation involved in skeletal muscle regeneration"/>
    <property type="evidence" value="ECO:0000250"/>
    <property type="project" value="BHF-UCL"/>
</dbReference>
<dbReference type="GO" id="GO:0045944">
    <property type="term" value="P:positive regulation of transcription by RNA polymerase II"/>
    <property type="evidence" value="ECO:0000250"/>
    <property type="project" value="BHF-UCL"/>
</dbReference>
<dbReference type="GO" id="GO:0006355">
    <property type="term" value="P:regulation of DNA-templated transcription"/>
    <property type="evidence" value="ECO:0000303"/>
    <property type="project" value="UniProtKB"/>
</dbReference>
<dbReference type="GO" id="GO:0006357">
    <property type="term" value="P:regulation of transcription by RNA polymerase II"/>
    <property type="evidence" value="ECO:0000304"/>
    <property type="project" value="ProtInc"/>
</dbReference>
<dbReference type="GO" id="GO:0043403">
    <property type="term" value="P:skeletal muscle tissue regeneration"/>
    <property type="evidence" value="ECO:0007669"/>
    <property type="project" value="Ensembl"/>
</dbReference>
<dbReference type="GO" id="GO:0060707">
    <property type="term" value="P:trophoblast giant cell differentiation"/>
    <property type="evidence" value="ECO:0000250"/>
    <property type="project" value="UniProtKB"/>
</dbReference>
<dbReference type="CDD" id="cd22028">
    <property type="entry name" value="HMG-box_SoxA_SoxB_SoxG"/>
    <property type="match status" value="1"/>
</dbReference>
<dbReference type="FunFam" id="1.10.30.10:FF:000002">
    <property type="entry name" value="transcription factor Sox-2"/>
    <property type="match status" value="1"/>
</dbReference>
<dbReference type="Gene3D" id="1.10.30.10">
    <property type="entry name" value="High mobility group box domain"/>
    <property type="match status" value="1"/>
</dbReference>
<dbReference type="InterPro" id="IPR009071">
    <property type="entry name" value="HMG_box_dom"/>
</dbReference>
<dbReference type="InterPro" id="IPR036910">
    <property type="entry name" value="HMG_box_dom_sf"/>
</dbReference>
<dbReference type="InterPro" id="IPR050140">
    <property type="entry name" value="SRY-related_HMG-box_TF-like"/>
</dbReference>
<dbReference type="PANTHER" id="PTHR10270:SF45">
    <property type="entry name" value="PROTEIN SOX-15"/>
    <property type="match status" value="1"/>
</dbReference>
<dbReference type="PANTHER" id="PTHR10270">
    <property type="entry name" value="SOX TRANSCRIPTION FACTOR"/>
    <property type="match status" value="1"/>
</dbReference>
<dbReference type="Pfam" id="PF00505">
    <property type="entry name" value="HMG_box"/>
    <property type="match status" value="1"/>
</dbReference>
<dbReference type="SMART" id="SM00398">
    <property type="entry name" value="HMG"/>
    <property type="match status" value="1"/>
</dbReference>
<dbReference type="SUPFAM" id="SSF47095">
    <property type="entry name" value="HMG-box"/>
    <property type="match status" value="1"/>
</dbReference>
<dbReference type="PROSITE" id="PS50118">
    <property type="entry name" value="HMG_BOX_2"/>
    <property type="match status" value="1"/>
</dbReference>
<accession>O60248</accession>
<accession>B4DWU7</accession>
<accession>D3DTQ0</accession>
<accession>P35717</accession>
<accession>Q9Y6W7</accession>
<gene>
    <name type="primary">SOX15</name>
    <name type="synonym">SOX12</name>
    <name type="synonym">SOX20</name>
    <name type="synonym">SOX26</name>
    <name type="synonym">SOX27</name>
</gene>
<feature type="chain" id="PRO_0000048762" description="Transcription factor SOX-15">
    <location>
        <begin position="1"/>
        <end position="233"/>
    </location>
</feature>
<feature type="DNA-binding region" description="HMG box" evidence="2">
    <location>
        <begin position="49"/>
        <end position="117"/>
    </location>
</feature>
<feature type="region of interest" description="Disordered" evidence="3">
    <location>
        <begin position="1"/>
        <end position="48"/>
    </location>
</feature>
<feature type="region of interest" description="Required to promote HAND1 transcriptional activator activity" evidence="1">
    <location>
        <begin position="1"/>
        <end position="47"/>
    </location>
</feature>
<feature type="region of interest" description="Disordered" evidence="3">
    <location>
        <begin position="113"/>
        <end position="153"/>
    </location>
</feature>
<feature type="region of interest" description="Interaction with FHL3" evidence="1">
    <location>
        <begin position="138"/>
        <end position="183"/>
    </location>
</feature>
<feature type="region of interest" description="Disordered" evidence="3">
    <location>
        <begin position="208"/>
        <end position="233"/>
    </location>
</feature>
<feature type="compositionally biased region" description="Polar residues" evidence="3">
    <location>
        <begin position="1"/>
        <end position="11"/>
    </location>
</feature>
<feature type="compositionally biased region" description="Low complexity" evidence="3">
    <location>
        <begin position="18"/>
        <end position="27"/>
    </location>
</feature>
<feature type="modified residue" description="Phosphoserine" evidence="9">
    <location>
        <position position="37"/>
    </location>
</feature>
<feature type="splice variant" id="VSP_056668" description="In isoform 2." evidence="6">
    <location>
        <begin position="179"/>
        <end position="233"/>
    </location>
</feature>
<feature type="sequence conflict" description="In Ref. 6." evidence="7" ref="6">
    <original>SSS</original>
    <variation>AAA</variation>
    <location>
        <begin position="25"/>
        <end position="27"/>
    </location>
</feature>
<feature type="sequence conflict" description="In Ref. 7; CAA51520." evidence="7" ref="7">
    <original>QQ</original>
    <variation>HE</variation>
    <location>
        <begin position="69"/>
        <end position="70"/>
    </location>
</feature>
<feature type="sequence conflict" description="In Ref. 9; BAA78784." evidence="7" ref="9">
    <original>S</original>
    <variation>F</variation>
    <location>
        <position position="191"/>
    </location>
</feature>
<feature type="sequence conflict" description="In Ref. 9; BAA78784." evidence="7" ref="9">
    <original>PTP</original>
    <variation>STS</variation>
    <location>
        <begin position="216"/>
        <end position="218"/>
    </location>
</feature>
<feature type="sequence conflict" description="In Ref. 9; BAA78784." evidence="7" ref="9">
    <original>GA</original>
    <variation>VP</variation>
    <location>
        <begin position="225"/>
        <end position="226"/>
    </location>
</feature>
<evidence type="ECO:0000250" key="1">
    <source>
        <dbReference type="UniProtKB" id="P43267"/>
    </source>
</evidence>
<evidence type="ECO:0000255" key="2">
    <source>
        <dbReference type="PROSITE-ProRule" id="PRU00267"/>
    </source>
</evidence>
<evidence type="ECO:0000256" key="3">
    <source>
        <dbReference type="SAM" id="MobiDB-lite"/>
    </source>
</evidence>
<evidence type="ECO:0000269" key="4">
    <source>
    </source>
</evidence>
<evidence type="ECO:0000269" key="5">
    <source>
    </source>
</evidence>
<evidence type="ECO:0000303" key="6">
    <source>
    </source>
</evidence>
<evidence type="ECO:0000305" key="7"/>
<evidence type="ECO:0000312" key="8">
    <source>
        <dbReference type="HGNC" id="HGNC:11196"/>
    </source>
</evidence>
<evidence type="ECO:0007744" key="9">
    <source>
    </source>
</evidence>
<organism>
    <name type="scientific">Homo sapiens</name>
    <name type="common">Human</name>
    <dbReference type="NCBI Taxonomy" id="9606"/>
    <lineage>
        <taxon>Eukaryota</taxon>
        <taxon>Metazoa</taxon>
        <taxon>Chordata</taxon>
        <taxon>Craniata</taxon>
        <taxon>Vertebrata</taxon>
        <taxon>Euteleostomi</taxon>
        <taxon>Mammalia</taxon>
        <taxon>Eutheria</taxon>
        <taxon>Euarchontoglires</taxon>
        <taxon>Primates</taxon>
        <taxon>Haplorrhini</taxon>
        <taxon>Catarrhini</taxon>
        <taxon>Hominidae</taxon>
        <taxon>Homo</taxon>
    </lineage>
</organism>
<protein>
    <recommendedName>
        <fullName evidence="7">Transcription factor SOX-15</fullName>
    </recommendedName>
    <alternativeName>
        <fullName>Protein SOX-12</fullName>
    </alternativeName>
    <alternativeName>
        <fullName>Protein SOX-20</fullName>
    </alternativeName>
    <alternativeName>
        <fullName evidence="8">SRY-box transcription factor 15</fullName>
    </alternativeName>
</protein>
<sequence>MALPGSSQDQAWSLEPPAATAAASSSSGPQEREGAGSPAAPGTLPLEKVKRPMNAFMVWSSAQRRQMAQQNPKMHNSEISKRLGAQWKLLDEDEKRPFVEEAKRLRARHLRDYPDYKYRPRRKAKSSGAGPSRCGQGRGNLASGGPLWGPGYATTQPSRGFGYRPPSYSTAYLPGSYGSSHCKLEAPSPCSLPQSDPRLQGELLPTYTHYLPPGSPTPYNPPLAGAPMPLTHL</sequence>
<comment type="function">
    <text evidence="1">Transcription factor that binds to DNA at the 5'-AACAATG-3' consensus sequence (By similarity). Acts as a transcriptional activator and repressor (By similarity). Binds synergistically with POU5F1 (OCT3/4) to gene promoters (By similarity). Binds to the FOXK1 promoter and recruits FHL3, resulting in transcriptional activation of FOXK1 which leads to myoblast proliferation (By similarity). Acts as an inhibitor of myoblast differentiation via transcriptional repression which leads to down-regulation of the muscle-specific genes MYOD and MYOG (By similarity). Involved in trophoblast giant cell differentiation via enhancement of HAND1 transcriptional activity (By similarity). Regulates transcription of HRC via binding to it proximal enhancer region (By similarity). Involved in skeletal muscle regeneration (By similarity). Also plays a role in the development of myogenic precursor cells (By similarity).</text>
</comment>
<comment type="subunit">
    <text evidence="1">Interacts with HAND1; the interaction enhances HAND1-induced differentiation of trophoblast giant cells (By similarity). Interacts with POU5F1 (OCT3/4); binds synergistically with POU5F1 to DNA (By similarity). Interacts with FHL3; the interaction recruits the transcriptional coactivator FHL3 to the FOXK1 promoter (By similarity).</text>
</comment>
<comment type="interaction">
    <interactant intactId="EBI-5452954">
        <id>O60248</id>
    </interactant>
    <interactant intactId="EBI-711810">
        <id>O14503</id>
        <label>BHLHE40</label>
    </interactant>
    <organismsDiffer>false</organismsDiffer>
    <experiments>3</experiments>
</comment>
<comment type="interaction">
    <interactant intactId="EBI-5452954">
        <id>O60248</id>
    </interactant>
    <interactant intactId="EBI-3957665">
        <id>Q96LI6</id>
        <label>HSFY2</label>
    </interactant>
    <organismsDiffer>false</organismsDiffer>
    <experiments>3</experiments>
</comment>
<comment type="subcellular location">
    <subcellularLocation>
        <location evidence="2">Nucleus</location>
    </subcellularLocation>
</comment>
<comment type="alternative products">
    <event type="alternative splicing"/>
    <isoform>
        <id>O60248-1</id>
        <name>1</name>
        <sequence type="displayed"/>
    </isoform>
    <isoform>
        <id>O60248-2</id>
        <name>2</name>
        <sequence type="described" ref="VSP_056668"/>
    </isoform>
</comment>
<comment type="tissue specificity">
    <text evidence="4 5">Widely expressed in fetal and adult tissues examined, highest level found in fetal spinal cord and adult brain and testis.</text>
</comment>
<keyword id="KW-0010">Activator</keyword>
<keyword id="KW-0025">Alternative splicing</keyword>
<keyword id="KW-0238">DNA-binding</keyword>
<keyword id="KW-0539">Nucleus</keyword>
<keyword id="KW-0597">Phosphoprotein</keyword>
<keyword id="KW-1267">Proteomics identification</keyword>
<keyword id="KW-1185">Reference proteome</keyword>
<keyword id="KW-0678">Repressor</keyword>
<keyword id="KW-0804">Transcription</keyword>
<keyword id="KW-0805">Transcription regulation</keyword>
<name>SOX15_HUMAN</name>
<proteinExistence type="evidence at protein level"/>